<keyword id="KW-0903">Direct protein sequencing</keyword>
<keyword id="KW-0378">Hydrolase</keyword>
<keyword id="KW-0442">Lipid degradation</keyword>
<keyword id="KW-0443">Lipid metabolism</keyword>
<keyword id="KW-0964">Secreted</keyword>
<keyword id="KW-0800">Toxin</keyword>
<feature type="chain" id="PRO_0000058227" description="Orientotoxin-2" evidence="1">
    <location>
        <begin position="1"/>
        <end position="139"/>
    </location>
</feature>
<proteinExistence type="evidence at protein level"/>
<sequence>FNPCPYSDDTVKMIILTEQNKKQDFYTLDTIGEHNQFNKLTAKSQVVFIVWQTGIGDAITARAASGLAMLVDKYQMAPVASDIKLCNAGCYCRPTAIQFAWEHKCVGIRCSDPGVPTDGLSGRPHYGETLHKVRSYNGK</sequence>
<organism>
    <name type="scientific">Vespa orientalis</name>
    <name type="common">Oriental hornet</name>
    <dbReference type="NCBI Taxonomy" id="7447"/>
    <lineage>
        <taxon>Eukaryota</taxon>
        <taxon>Metazoa</taxon>
        <taxon>Ecdysozoa</taxon>
        <taxon>Arthropoda</taxon>
        <taxon>Hexapoda</taxon>
        <taxon>Insecta</taxon>
        <taxon>Pterygota</taxon>
        <taxon>Neoptera</taxon>
        <taxon>Endopterygota</taxon>
        <taxon>Hymenoptera</taxon>
        <taxon>Apocrita</taxon>
        <taxon>Aculeata</taxon>
        <taxon>Vespoidea</taxon>
        <taxon>Vespidae</taxon>
        <taxon>Vespinae</taxon>
        <taxon>Vespa</taxon>
    </lineage>
</organism>
<accession>Q7M3V3</accession>
<name>PAO2_VESOR</name>
<comment type="function">
    <text evidence="1">Has a highly toxic phospholipase A2 activity.</text>
</comment>
<comment type="catalytic activity">
    <reaction evidence="1">
        <text>a 1,2-diacyl-sn-glycero-3-phosphocholine + H2O = a 1-acyl-sn-glycero-3-phosphocholine + a fatty acid + H(+)</text>
        <dbReference type="Rhea" id="RHEA:15801"/>
        <dbReference type="ChEBI" id="CHEBI:15377"/>
        <dbReference type="ChEBI" id="CHEBI:15378"/>
        <dbReference type="ChEBI" id="CHEBI:28868"/>
        <dbReference type="ChEBI" id="CHEBI:57643"/>
        <dbReference type="ChEBI" id="CHEBI:58168"/>
        <dbReference type="EC" id="3.1.1.4"/>
    </reaction>
</comment>
<comment type="subcellular location">
    <subcellularLocation>
        <location evidence="1">Secreted</location>
    </subcellularLocation>
</comment>
<comment type="tissue specificity">
    <text evidence="4">Expressed by the venom gland.</text>
</comment>
<protein>
    <recommendedName>
        <fullName evidence="3">Orientotoxin-2</fullName>
        <ecNumber evidence="1">3.1.1.4</ecNumber>
    </recommendedName>
    <alternativeName>
        <fullName evidence="2">Orientotoxin II</fullName>
    </alternativeName>
    <alternativeName>
        <fullName evidence="2">Phospholipase A2</fullName>
    </alternativeName>
</protein>
<dbReference type="EC" id="3.1.1.4" evidence="1"/>
<dbReference type="PIR" id="JN0427">
    <property type="entry name" value="JN0427"/>
</dbReference>
<dbReference type="GO" id="GO:0005576">
    <property type="term" value="C:extracellular region"/>
    <property type="evidence" value="ECO:0007669"/>
    <property type="project" value="UniProtKB-SubCell"/>
</dbReference>
<dbReference type="GO" id="GO:0004623">
    <property type="term" value="F:phospholipase A2 activity"/>
    <property type="evidence" value="ECO:0007669"/>
    <property type="project" value="UniProtKB-EC"/>
</dbReference>
<dbReference type="GO" id="GO:0090729">
    <property type="term" value="F:toxin activity"/>
    <property type="evidence" value="ECO:0007669"/>
    <property type="project" value="UniProtKB-KW"/>
</dbReference>
<dbReference type="GO" id="GO:0016042">
    <property type="term" value="P:lipid catabolic process"/>
    <property type="evidence" value="ECO:0007669"/>
    <property type="project" value="UniProtKB-KW"/>
</dbReference>
<reference key="1">
    <citation type="journal article" date="1989" name="Bioorg. Khim.">
        <title>Amino acid sequence of orientotoxin I and orientotoxin II from the hornet Vespa orientalis venom.</title>
        <authorList>
            <person name="Korneev A.S."/>
            <person name="Salikhov S.I."/>
            <person name="Tuychibaev M.U."/>
        </authorList>
    </citation>
    <scope>PROTEIN SEQUENCE</scope>
    <scope>FUNCTION</scope>
    <scope>CATALYTIC ACTIVITY</scope>
    <scope>SUBCELLULAR LOCATION</scope>
    <source>
        <tissue>Venom</tissue>
    </source>
</reference>
<evidence type="ECO:0000269" key="1">
    <source>
    </source>
</evidence>
<evidence type="ECO:0000303" key="2">
    <source>
    </source>
</evidence>
<evidence type="ECO:0000305" key="3"/>
<evidence type="ECO:0000305" key="4">
    <source>
    </source>
</evidence>